<gene>
    <name evidence="1" type="primary">pyrE</name>
    <name type="ordered locus">SSO0615</name>
    <name type="ORF">C08_035</name>
</gene>
<keyword id="KW-0328">Glycosyltransferase</keyword>
<keyword id="KW-0460">Magnesium</keyword>
<keyword id="KW-0665">Pyrimidine biosynthesis</keyword>
<keyword id="KW-1185">Reference proteome</keyword>
<keyword id="KW-0808">Transferase</keyword>
<name>PYRE_SACS2</name>
<proteinExistence type="inferred from homology"/>
<dbReference type="EC" id="2.4.2.10" evidence="1"/>
<dbReference type="EMBL" id="Y18930">
    <property type="protein sequence ID" value="CAB57685.1"/>
    <property type="molecule type" value="Genomic_DNA"/>
</dbReference>
<dbReference type="EMBL" id="AE006641">
    <property type="protein sequence ID" value="AAK40926.1"/>
    <property type="molecule type" value="Genomic_DNA"/>
</dbReference>
<dbReference type="PIR" id="G90208">
    <property type="entry name" value="G90208"/>
</dbReference>
<dbReference type="RefSeq" id="WP_009991146.1">
    <property type="nucleotide sequence ID" value="NC_002754.1"/>
</dbReference>
<dbReference type="SMR" id="Q9UX09"/>
<dbReference type="FunCoup" id="Q9UX09">
    <property type="interactions" value="153"/>
</dbReference>
<dbReference type="STRING" id="273057.SSO0615"/>
<dbReference type="PaxDb" id="273057-SSO0615"/>
<dbReference type="EnsemblBacteria" id="AAK40926">
    <property type="protein sequence ID" value="AAK40926"/>
    <property type="gene ID" value="SSO0615"/>
</dbReference>
<dbReference type="GeneID" id="44129617"/>
<dbReference type="KEGG" id="sso:SSO0615"/>
<dbReference type="PATRIC" id="fig|273057.12.peg.623"/>
<dbReference type="eggNOG" id="arCOG00029">
    <property type="taxonomic scope" value="Archaea"/>
</dbReference>
<dbReference type="HOGENOM" id="CLU_074878_2_0_2"/>
<dbReference type="InParanoid" id="Q9UX09"/>
<dbReference type="PhylomeDB" id="Q9UX09"/>
<dbReference type="UniPathway" id="UPA00070">
    <property type="reaction ID" value="UER00119"/>
</dbReference>
<dbReference type="Proteomes" id="UP000001974">
    <property type="component" value="Chromosome"/>
</dbReference>
<dbReference type="GO" id="GO:0000287">
    <property type="term" value="F:magnesium ion binding"/>
    <property type="evidence" value="ECO:0007669"/>
    <property type="project" value="UniProtKB-UniRule"/>
</dbReference>
<dbReference type="GO" id="GO:0004588">
    <property type="term" value="F:orotate phosphoribosyltransferase activity"/>
    <property type="evidence" value="ECO:0000318"/>
    <property type="project" value="GO_Central"/>
</dbReference>
<dbReference type="GO" id="GO:0044205">
    <property type="term" value="P:'de novo' UMP biosynthetic process"/>
    <property type="evidence" value="ECO:0007669"/>
    <property type="project" value="UniProtKB-UniRule"/>
</dbReference>
<dbReference type="GO" id="GO:0019856">
    <property type="term" value="P:pyrimidine nucleobase biosynthetic process"/>
    <property type="evidence" value="ECO:0000318"/>
    <property type="project" value="GO_Central"/>
</dbReference>
<dbReference type="GO" id="GO:0006222">
    <property type="term" value="P:UMP biosynthetic process"/>
    <property type="evidence" value="ECO:0000318"/>
    <property type="project" value="GO_Central"/>
</dbReference>
<dbReference type="CDD" id="cd06223">
    <property type="entry name" value="PRTases_typeI"/>
    <property type="match status" value="1"/>
</dbReference>
<dbReference type="FunFam" id="3.40.50.2020:FF:000058">
    <property type="entry name" value="Orotidine-5-phosphate decarboxylase/orotate phosphoribosyltransferase"/>
    <property type="match status" value="1"/>
</dbReference>
<dbReference type="Gene3D" id="3.40.50.2020">
    <property type="match status" value="1"/>
</dbReference>
<dbReference type="HAMAP" id="MF_01208">
    <property type="entry name" value="PyrE"/>
    <property type="match status" value="1"/>
</dbReference>
<dbReference type="InterPro" id="IPR023031">
    <property type="entry name" value="OPRT"/>
</dbReference>
<dbReference type="InterPro" id="IPR004467">
    <property type="entry name" value="Or_phspho_trans_dom"/>
</dbReference>
<dbReference type="InterPro" id="IPR000836">
    <property type="entry name" value="PRibTrfase_dom"/>
</dbReference>
<dbReference type="InterPro" id="IPR029057">
    <property type="entry name" value="PRTase-like"/>
</dbReference>
<dbReference type="NCBIfam" id="TIGR00336">
    <property type="entry name" value="pyrE"/>
    <property type="match status" value="1"/>
</dbReference>
<dbReference type="PANTHER" id="PTHR19278">
    <property type="entry name" value="OROTATE PHOSPHORIBOSYLTRANSFERASE"/>
    <property type="match status" value="1"/>
</dbReference>
<dbReference type="PANTHER" id="PTHR19278:SF9">
    <property type="entry name" value="URIDINE 5'-MONOPHOSPHATE SYNTHASE"/>
    <property type="match status" value="1"/>
</dbReference>
<dbReference type="Pfam" id="PF00156">
    <property type="entry name" value="Pribosyltran"/>
    <property type="match status" value="1"/>
</dbReference>
<dbReference type="SUPFAM" id="SSF53271">
    <property type="entry name" value="PRTase-like"/>
    <property type="match status" value="1"/>
</dbReference>
<comment type="function">
    <text evidence="1">Catalyzes the transfer of a ribosyl phosphate group from 5-phosphoribose 1-diphosphate to orotate, leading to the formation of orotidine monophosphate (OMP).</text>
</comment>
<comment type="catalytic activity">
    <reaction evidence="1">
        <text>orotidine 5'-phosphate + diphosphate = orotate + 5-phospho-alpha-D-ribose 1-diphosphate</text>
        <dbReference type="Rhea" id="RHEA:10380"/>
        <dbReference type="ChEBI" id="CHEBI:30839"/>
        <dbReference type="ChEBI" id="CHEBI:33019"/>
        <dbReference type="ChEBI" id="CHEBI:57538"/>
        <dbReference type="ChEBI" id="CHEBI:58017"/>
        <dbReference type="EC" id="2.4.2.10"/>
    </reaction>
</comment>
<comment type="cofactor">
    <cofactor evidence="1">
        <name>Mg(2+)</name>
        <dbReference type="ChEBI" id="CHEBI:18420"/>
    </cofactor>
</comment>
<comment type="pathway">
    <text evidence="1">Pyrimidine metabolism; UMP biosynthesis via de novo pathway; UMP from orotate: step 1/2.</text>
</comment>
<comment type="subunit">
    <text evidence="1">Homodimer.</text>
</comment>
<comment type="similarity">
    <text evidence="1">Belongs to the purine/pyrimidine phosphoribosyltransferase family. PyrE subfamily.</text>
</comment>
<reference key="1">
    <citation type="journal article" date="2000" name="Genome">
        <title>Gene content and organization of a 281-kbp contig from the genome of the extremely thermophilic archaeon, Sulfolobus solfataricus P2.</title>
        <authorList>
            <person name="Charlebois R.L."/>
            <person name="Singh R.K."/>
            <person name="Chan-Weiher C.C.-Y."/>
            <person name="Allard G."/>
            <person name="Chow C."/>
            <person name="Confalonieri F."/>
            <person name="Curtis B."/>
            <person name="Duguet M."/>
            <person name="Erauso G."/>
            <person name="Faguy D."/>
            <person name="Gaasterland T."/>
            <person name="Garrett R.A."/>
            <person name="Gordon P."/>
            <person name="Jeffries A.C."/>
            <person name="Kozera C."/>
            <person name="Kushwaha N."/>
            <person name="Lafleur E."/>
            <person name="Medina N."/>
            <person name="Peng X."/>
            <person name="Penny S.L."/>
            <person name="She Q."/>
            <person name="St Jean A."/>
            <person name="van der Oost J."/>
            <person name="Young F."/>
            <person name="Zivanovic Y."/>
            <person name="Doolittle W.F."/>
            <person name="Ragan M.A."/>
            <person name="Sensen C.W."/>
        </authorList>
    </citation>
    <scope>NUCLEOTIDE SEQUENCE [LARGE SCALE GENOMIC DNA]</scope>
    <source>
        <strain>ATCC 35092 / DSM 1617 / JCM 11322 / P2</strain>
    </source>
</reference>
<reference key="2">
    <citation type="journal article" date="2001" name="Proc. Natl. Acad. Sci. U.S.A.">
        <title>The complete genome of the crenarchaeon Sulfolobus solfataricus P2.</title>
        <authorList>
            <person name="She Q."/>
            <person name="Singh R.K."/>
            <person name="Confalonieri F."/>
            <person name="Zivanovic Y."/>
            <person name="Allard G."/>
            <person name="Awayez M.J."/>
            <person name="Chan-Weiher C.C.-Y."/>
            <person name="Clausen I.G."/>
            <person name="Curtis B.A."/>
            <person name="De Moors A."/>
            <person name="Erauso G."/>
            <person name="Fletcher C."/>
            <person name="Gordon P.M.K."/>
            <person name="Heikamp-de Jong I."/>
            <person name="Jeffries A.C."/>
            <person name="Kozera C.J."/>
            <person name="Medina N."/>
            <person name="Peng X."/>
            <person name="Thi-Ngoc H.P."/>
            <person name="Redder P."/>
            <person name="Schenk M.E."/>
            <person name="Theriault C."/>
            <person name="Tolstrup N."/>
            <person name="Charlebois R.L."/>
            <person name="Doolittle W.F."/>
            <person name="Duguet M."/>
            <person name="Gaasterland T."/>
            <person name="Garrett R.A."/>
            <person name="Ragan M.A."/>
            <person name="Sensen C.W."/>
            <person name="Van der Oost J."/>
        </authorList>
    </citation>
    <scope>NUCLEOTIDE SEQUENCE [LARGE SCALE GENOMIC DNA]</scope>
    <source>
        <strain>ATCC 35092 / DSM 1617 / JCM 11322 / P2</strain>
    </source>
</reference>
<protein>
    <recommendedName>
        <fullName evidence="1">Orotate phosphoribosyltransferase</fullName>
        <shortName evidence="1">OPRT</shortName>
        <shortName evidence="1">OPRTase</shortName>
        <ecNumber evidence="1">2.4.2.10</ecNumber>
    </recommendedName>
</protein>
<accession>Q9UX09</accession>
<evidence type="ECO:0000255" key="1">
    <source>
        <dbReference type="HAMAP-Rule" id="MF_01208"/>
    </source>
</evidence>
<feature type="chain" id="PRO_0000110790" description="Orotate phosphoribosyltransferase">
    <location>
        <begin position="1"/>
        <end position="195"/>
    </location>
</feature>
<feature type="binding site" evidence="1">
    <location>
        <position position="86"/>
    </location>
    <ligand>
        <name>5-phospho-alpha-D-ribose 1-diphosphate</name>
        <dbReference type="ChEBI" id="CHEBI:58017"/>
        <note>ligand shared between dimeric partners</note>
    </ligand>
</feature>
<feature type="binding site" evidence="1">
    <location>
        <position position="90"/>
    </location>
    <ligand>
        <name>5-phospho-alpha-D-ribose 1-diphosphate</name>
        <dbReference type="ChEBI" id="CHEBI:58017"/>
        <note>ligand shared between dimeric partners</note>
    </ligand>
</feature>
<feature type="binding site" evidence="1">
    <location>
        <position position="92"/>
    </location>
    <ligand>
        <name>5-phospho-alpha-D-ribose 1-diphosphate</name>
        <dbReference type="ChEBI" id="CHEBI:58017"/>
        <note>ligand shared between dimeric partners</note>
    </ligand>
</feature>
<feature type="binding site" description="in other chain" evidence="1">
    <location>
        <begin position="111"/>
        <end position="119"/>
    </location>
    <ligand>
        <name>5-phospho-alpha-D-ribose 1-diphosphate</name>
        <dbReference type="ChEBI" id="CHEBI:58017"/>
        <note>ligand shared between dimeric partners</note>
    </ligand>
</feature>
<feature type="binding site" evidence="1">
    <location>
        <position position="115"/>
    </location>
    <ligand>
        <name>orotate</name>
        <dbReference type="ChEBI" id="CHEBI:30839"/>
    </ligand>
</feature>
<feature type="binding site" evidence="1">
    <location>
        <position position="143"/>
    </location>
    <ligand>
        <name>orotate</name>
        <dbReference type="ChEBI" id="CHEBI:30839"/>
    </ligand>
</feature>
<organism>
    <name type="scientific">Saccharolobus solfataricus (strain ATCC 35092 / DSM 1617 / JCM 11322 / P2)</name>
    <name type="common">Sulfolobus solfataricus</name>
    <dbReference type="NCBI Taxonomy" id="273057"/>
    <lineage>
        <taxon>Archaea</taxon>
        <taxon>Thermoproteota</taxon>
        <taxon>Thermoprotei</taxon>
        <taxon>Sulfolobales</taxon>
        <taxon>Sulfolobaceae</taxon>
        <taxon>Saccharolobus</taxon>
    </lineage>
</organism>
<sequence length="195" mass="21614">MNFAEVLLERKLLLIGSFVLTSGKVSPYYLDLRPLPNYPEFYDIVNQAIKKAKDIPHDIIVGIATGGVPLSAFIACNLKEPMGYIRIEKKGHGTNRTLELDVKGKRVLLVDDVATTGVSIEKATLEILNGGGKVSDALVIIDRQEGASQRLEKLGVKLHSLFKISEILDELLKSDKLKDNEKKSILDYLVKNVEK</sequence>